<feature type="chain" id="PRO_0000179028" description="GTPase Der">
    <location>
        <begin position="1"/>
        <end position="455"/>
    </location>
</feature>
<feature type="domain" description="EngA-type G 1">
    <location>
        <begin position="4"/>
        <end position="169"/>
    </location>
</feature>
<feature type="domain" description="EngA-type G 2">
    <location>
        <begin position="178"/>
        <end position="353"/>
    </location>
</feature>
<feature type="domain" description="KH-like" evidence="1">
    <location>
        <begin position="354"/>
        <end position="439"/>
    </location>
</feature>
<feature type="binding site" evidence="1">
    <location>
        <begin position="10"/>
        <end position="17"/>
    </location>
    <ligand>
        <name>GTP</name>
        <dbReference type="ChEBI" id="CHEBI:37565"/>
        <label>1</label>
    </ligand>
</feature>
<feature type="binding site" evidence="1">
    <location>
        <begin position="57"/>
        <end position="61"/>
    </location>
    <ligand>
        <name>GTP</name>
        <dbReference type="ChEBI" id="CHEBI:37565"/>
        <label>1</label>
    </ligand>
</feature>
<feature type="binding site" evidence="1">
    <location>
        <begin position="120"/>
        <end position="123"/>
    </location>
    <ligand>
        <name>GTP</name>
        <dbReference type="ChEBI" id="CHEBI:37565"/>
        <label>1</label>
    </ligand>
</feature>
<feature type="binding site" evidence="1">
    <location>
        <begin position="184"/>
        <end position="191"/>
    </location>
    <ligand>
        <name>GTP</name>
        <dbReference type="ChEBI" id="CHEBI:37565"/>
        <label>2</label>
    </ligand>
</feature>
<feature type="binding site" evidence="1">
    <location>
        <begin position="231"/>
        <end position="235"/>
    </location>
    <ligand>
        <name>GTP</name>
        <dbReference type="ChEBI" id="CHEBI:37565"/>
        <label>2</label>
    </ligand>
</feature>
<feature type="binding site" evidence="1">
    <location>
        <begin position="296"/>
        <end position="299"/>
    </location>
    <ligand>
        <name>GTP</name>
        <dbReference type="ChEBI" id="CHEBI:37565"/>
        <label>2</label>
    </ligand>
</feature>
<evidence type="ECO:0000255" key="1">
    <source>
        <dbReference type="HAMAP-Rule" id="MF_00195"/>
    </source>
</evidence>
<protein>
    <recommendedName>
        <fullName evidence="1">GTPase Der</fullName>
    </recommendedName>
    <alternativeName>
        <fullName evidence="1">GTP-binding protein EngA</fullName>
    </alternativeName>
</protein>
<sequence>MARPIVAIIGRPNVGKSTLVNRLCRSREAIVDDKPGVTRDRTYQDGFWGDREFKVVDTGGLVFDDDSEFLPEIREQANLALAEASVALVIVDGQQGVTAADESIAEWLRTQPCPTLVAVNKCESPDQGLAMAAEFWRLGLGEPFPISAIHGAGTGDLLDRVLSLLPPKHEEPEEDEPIQMAIIGRPNVGKSSLLNAICGEPRAIVSPIRGTTRDTIDTRLEREGHPWRLIDTAGIRRRRSVNYGPEFFGINRSFKAIERSDVCVLVIDALDGVTEQDQRLAGRIEDDGRACVLVVNKWDAVEKDSHTMPMVEKELRAKLYFLDWATMLFTSALTGQRVESIFALASLAVEQHRRRVSTSVVNEVLKEALSWRSPPTSRGGRQGRLYYGTQVASRPPSFTLFVNDPKLFGDTYRRYVERQLREGLGFDGTPLKLFWRGKQQRAAERELARQQNRLG</sequence>
<reference key="1">
    <citation type="journal article" date="2003" name="Nature">
        <title>Genome divergence in two Prochlorococcus ecotypes reflects oceanic niche differentiation.</title>
        <authorList>
            <person name="Rocap G."/>
            <person name="Larimer F.W."/>
            <person name="Lamerdin J.E."/>
            <person name="Malfatti S."/>
            <person name="Chain P."/>
            <person name="Ahlgren N.A."/>
            <person name="Arellano A."/>
            <person name="Coleman M."/>
            <person name="Hauser L."/>
            <person name="Hess W.R."/>
            <person name="Johnson Z.I."/>
            <person name="Land M.L."/>
            <person name="Lindell D."/>
            <person name="Post A.F."/>
            <person name="Regala W."/>
            <person name="Shah M."/>
            <person name="Shaw S.L."/>
            <person name="Steglich C."/>
            <person name="Sullivan M.B."/>
            <person name="Ting C.S."/>
            <person name="Tolonen A."/>
            <person name="Webb E.A."/>
            <person name="Zinser E.R."/>
            <person name="Chisholm S.W."/>
        </authorList>
    </citation>
    <scope>NUCLEOTIDE SEQUENCE [LARGE SCALE GENOMIC DNA]</scope>
    <source>
        <strain>MIT 9313</strain>
    </source>
</reference>
<proteinExistence type="inferred from homology"/>
<dbReference type="EMBL" id="BX548175">
    <property type="protein sequence ID" value="CAE20378.1"/>
    <property type="molecule type" value="Genomic_DNA"/>
</dbReference>
<dbReference type="RefSeq" id="WP_011129582.1">
    <property type="nucleotide sequence ID" value="NC_005071.1"/>
</dbReference>
<dbReference type="SMR" id="Q7V8X0"/>
<dbReference type="KEGG" id="pmt:PMT_0203"/>
<dbReference type="eggNOG" id="COG1160">
    <property type="taxonomic scope" value="Bacteria"/>
</dbReference>
<dbReference type="HOGENOM" id="CLU_016077_6_2_3"/>
<dbReference type="OrthoDB" id="9805918at2"/>
<dbReference type="Proteomes" id="UP000001423">
    <property type="component" value="Chromosome"/>
</dbReference>
<dbReference type="GO" id="GO:0016887">
    <property type="term" value="F:ATP hydrolysis activity"/>
    <property type="evidence" value="ECO:0007669"/>
    <property type="project" value="InterPro"/>
</dbReference>
<dbReference type="GO" id="GO:0005525">
    <property type="term" value="F:GTP binding"/>
    <property type="evidence" value="ECO:0007669"/>
    <property type="project" value="UniProtKB-UniRule"/>
</dbReference>
<dbReference type="GO" id="GO:0043022">
    <property type="term" value="F:ribosome binding"/>
    <property type="evidence" value="ECO:0007669"/>
    <property type="project" value="TreeGrafter"/>
</dbReference>
<dbReference type="GO" id="GO:0042254">
    <property type="term" value="P:ribosome biogenesis"/>
    <property type="evidence" value="ECO:0007669"/>
    <property type="project" value="UniProtKB-KW"/>
</dbReference>
<dbReference type="CDD" id="cd01894">
    <property type="entry name" value="EngA1"/>
    <property type="match status" value="1"/>
</dbReference>
<dbReference type="CDD" id="cd01895">
    <property type="entry name" value="EngA2"/>
    <property type="match status" value="1"/>
</dbReference>
<dbReference type="FunFam" id="3.30.300.20:FF:000004">
    <property type="entry name" value="GTPase Der"/>
    <property type="match status" value="1"/>
</dbReference>
<dbReference type="FunFam" id="3.40.50.300:FF:000040">
    <property type="entry name" value="GTPase Der"/>
    <property type="match status" value="1"/>
</dbReference>
<dbReference type="FunFam" id="3.40.50.300:FF:000057">
    <property type="entry name" value="GTPase Der"/>
    <property type="match status" value="1"/>
</dbReference>
<dbReference type="Gene3D" id="3.30.300.20">
    <property type="match status" value="1"/>
</dbReference>
<dbReference type="Gene3D" id="3.40.50.300">
    <property type="entry name" value="P-loop containing nucleotide triphosphate hydrolases"/>
    <property type="match status" value="2"/>
</dbReference>
<dbReference type="HAMAP" id="MF_00195">
    <property type="entry name" value="GTPase_Der"/>
    <property type="match status" value="1"/>
</dbReference>
<dbReference type="InterPro" id="IPR003593">
    <property type="entry name" value="AAA+_ATPase"/>
</dbReference>
<dbReference type="InterPro" id="IPR031166">
    <property type="entry name" value="G_ENGA"/>
</dbReference>
<dbReference type="InterPro" id="IPR006073">
    <property type="entry name" value="GTP-bd"/>
</dbReference>
<dbReference type="InterPro" id="IPR016484">
    <property type="entry name" value="GTPase_Der"/>
</dbReference>
<dbReference type="InterPro" id="IPR032859">
    <property type="entry name" value="KH_dom-like"/>
</dbReference>
<dbReference type="InterPro" id="IPR015946">
    <property type="entry name" value="KH_dom-like_a/b"/>
</dbReference>
<dbReference type="InterPro" id="IPR027417">
    <property type="entry name" value="P-loop_NTPase"/>
</dbReference>
<dbReference type="InterPro" id="IPR005225">
    <property type="entry name" value="Small_GTP-bd"/>
</dbReference>
<dbReference type="NCBIfam" id="TIGR03594">
    <property type="entry name" value="GTPase_EngA"/>
    <property type="match status" value="1"/>
</dbReference>
<dbReference type="NCBIfam" id="TIGR00231">
    <property type="entry name" value="small_GTP"/>
    <property type="match status" value="2"/>
</dbReference>
<dbReference type="PANTHER" id="PTHR43834">
    <property type="entry name" value="GTPASE DER"/>
    <property type="match status" value="1"/>
</dbReference>
<dbReference type="PANTHER" id="PTHR43834:SF6">
    <property type="entry name" value="GTPASE DER"/>
    <property type="match status" value="1"/>
</dbReference>
<dbReference type="Pfam" id="PF14714">
    <property type="entry name" value="KH_dom-like"/>
    <property type="match status" value="1"/>
</dbReference>
<dbReference type="Pfam" id="PF01926">
    <property type="entry name" value="MMR_HSR1"/>
    <property type="match status" value="2"/>
</dbReference>
<dbReference type="PIRSF" id="PIRSF006485">
    <property type="entry name" value="GTP-binding_EngA"/>
    <property type="match status" value="1"/>
</dbReference>
<dbReference type="PRINTS" id="PR00326">
    <property type="entry name" value="GTP1OBG"/>
</dbReference>
<dbReference type="SMART" id="SM00382">
    <property type="entry name" value="AAA"/>
    <property type="match status" value="2"/>
</dbReference>
<dbReference type="SUPFAM" id="SSF52540">
    <property type="entry name" value="P-loop containing nucleoside triphosphate hydrolases"/>
    <property type="match status" value="2"/>
</dbReference>
<dbReference type="PROSITE" id="PS51712">
    <property type="entry name" value="G_ENGA"/>
    <property type="match status" value="2"/>
</dbReference>
<keyword id="KW-0342">GTP-binding</keyword>
<keyword id="KW-0547">Nucleotide-binding</keyword>
<keyword id="KW-1185">Reference proteome</keyword>
<keyword id="KW-0677">Repeat</keyword>
<keyword id="KW-0690">Ribosome biogenesis</keyword>
<name>DER_PROMM</name>
<organism>
    <name type="scientific">Prochlorococcus marinus (strain MIT 9313)</name>
    <dbReference type="NCBI Taxonomy" id="74547"/>
    <lineage>
        <taxon>Bacteria</taxon>
        <taxon>Bacillati</taxon>
        <taxon>Cyanobacteriota</taxon>
        <taxon>Cyanophyceae</taxon>
        <taxon>Synechococcales</taxon>
        <taxon>Prochlorococcaceae</taxon>
        <taxon>Prochlorococcus</taxon>
    </lineage>
</organism>
<comment type="function">
    <text evidence="1">GTPase that plays an essential role in the late steps of ribosome biogenesis.</text>
</comment>
<comment type="subunit">
    <text evidence="1">Associates with the 50S ribosomal subunit.</text>
</comment>
<comment type="similarity">
    <text evidence="1">Belongs to the TRAFAC class TrmE-Era-EngA-EngB-Septin-like GTPase superfamily. EngA (Der) GTPase family.</text>
</comment>
<accession>Q7V8X0</accession>
<gene>
    <name evidence="1" type="primary">der</name>
    <name type="synonym">engA</name>
    <name type="ordered locus">PMT_0203</name>
</gene>